<sequence length="734" mass="82382">MALRFPRFSQGLAQDPTTRRIWFGIATAHDFESHDDITEERLYQNIFASHFGQLAIIFLWTSGNLFHVAWQGNFESWVQDPLHVRPIAHAIWDPHFGQPAVEAFTRGGALGPVNIAYSGVYQWWYTIGLRTNEDLYTGALFLLFLSAISLIAGWLHLQPKWKPSVSWFKNAESRLNHHLSGLFGVSSLAWTGHLVHVAIPASRGEYVRWNNLLDVLPHPQGLGPLFTGQWNLYAQNPDSSSHLFGTSQGAGTAILTLLGGFHPQTQSLWLTDMAHHHLAIAFIFLVAGHMYRTNFGIGHSMKDLLDAHIPPGGRLGRGHKGLYDTINNSLHFQLGLALASLGVITSLVAQHMYSLPAYAFIAQDFTTQAALYTHHQYIAGFIMTGAFAHGAIFFIRDYSPEQNEDNVLARMLDHKEAIISHLSWASLFLGFHTLGLYVHNDVMLAFGTPEKQILIEPIFAQWIQSAHGKTSYGFDVLLSSTNGPAFNAGRSIWLPGWLNAVNETSNSLFLTIGPGDFLVHHAIALGLHTTTLILVKGALDARGSKLMPDKKDFGYSFPCDGPGRGGTCDISAWDAFYLAVFWMLNTIGWVTFYWHWKHITLWQGNVSQFNESSTYLMGWLRDYLWLNSSQLINGYNPFGMNSLSVWAWMFLFGHLVWATGFMFLISWRGYWQELIETLAWAHERTPLANLIRWRDKPVALSIVQARLVGLAHFSVGYIFTYAAFLIASTSGKFG</sequence>
<comment type="function">
    <text evidence="1">PsaA and PsaB bind P700, the primary electron donor of photosystem I (PSI), as well as the electron acceptors A0, A1 and FX. PSI is a plastocyanin-ferredoxin oxidoreductase, converting photonic excitation into a charge separation, which transfers an electron from the donor P700 chlorophyll pair to the spectroscopically characterized acceptors A0, A1, FX, FA and FB in turn. Oxidized P700 is reduced on the lumenal side of the thylakoid membrane by plastocyanin.</text>
</comment>
<comment type="catalytic activity">
    <reaction evidence="1">
        <text>reduced [plastocyanin] + hnu + oxidized [2Fe-2S]-[ferredoxin] = oxidized [plastocyanin] + reduced [2Fe-2S]-[ferredoxin]</text>
        <dbReference type="Rhea" id="RHEA:30407"/>
        <dbReference type="Rhea" id="RHEA-COMP:10000"/>
        <dbReference type="Rhea" id="RHEA-COMP:10001"/>
        <dbReference type="Rhea" id="RHEA-COMP:10039"/>
        <dbReference type="Rhea" id="RHEA-COMP:10040"/>
        <dbReference type="ChEBI" id="CHEBI:29036"/>
        <dbReference type="ChEBI" id="CHEBI:30212"/>
        <dbReference type="ChEBI" id="CHEBI:33737"/>
        <dbReference type="ChEBI" id="CHEBI:33738"/>
        <dbReference type="ChEBI" id="CHEBI:49552"/>
        <dbReference type="EC" id="1.97.1.12"/>
    </reaction>
</comment>
<comment type="cofactor">
    <text evidence="1">P700 is a chlorophyll a/chlorophyll a' dimer, A0 is one or more chlorophyll a, A1 is one or both phylloquinones and FX is a shared 4Fe-4S iron-sulfur center.</text>
</comment>
<comment type="subunit">
    <text evidence="1">The PsaA/B heterodimer binds the P700 chlorophyll special pair and subsequent electron acceptors. PSI consists of a core antenna complex that captures photons, and an electron transfer chain that converts photonic excitation into a charge separation. The eukaryotic PSI reaction center is composed of at least 11 subunits.</text>
</comment>
<comment type="subcellular location">
    <subcellularLocation>
        <location>Plastid</location>
        <location>Chloroplast thylakoid membrane</location>
        <topology>Multi-pass membrane protein</topology>
    </subcellularLocation>
</comment>
<comment type="similarity">
    <text evidence="1">Belongs to the PsaA/PsaB family.</text>
</comment>
<geneLocation type="chloroplast"/>
<accession>Q0G9W3</accession>
<proteinExistence type="inferred from homology"/>
<evidence type="ECO:0000255" key="1">
    <source>
        <dbReference type="HAMAP-Rule" id="MF_00482"/>
    </source>
</evidence>
<organism>
    <name type="scientific">Daucus carota</name>
    <name type="common">Wild carrot</name>
    <dbReference type="NCBI Taxonomy" id="4039"/>
    <lineage>
        <taxon>Eukaryota</taxon>
        <taxon>Viridiplantae</taxon>
        <taxon>Streptophyta</taxon>
        <taxon>Embryophyta</taxon>
        <taxon>Tracheophyta</taxon>
        <taxon>Spermatophyta</taxon>
        <taxon>Magnoliopsida</taxon>
        <taxon>eudicotyledons</taxon>
        <taxon>Gunneridae</taxon>
        <taxon>Pentapetalae</taxon>
        <taxon>asterids</taxon>
        <taxon>campanulids</taxon>
        <taxon>Apiales</taxon>
        <taxon>Apiaceae</taxon>
        <taxon>Apioideae</taxon>
        <taxon>Scandiceae</taxon>
        <taxon>Daucinae</taxon>
        <taxon>Daucus</taxon>
        <taxon>Daucus sect. Daucus</taxon>
    </lineage>
</organism>
<name>PSAB_DAUCA</name>
<protein>
    <recommendedName>
        <fullName evidence="1">Photosystem I P700 chlorophyll a apoprotein A2</fullName>
        <ecNumber evidence="1">1.97.1.12</ecNumber>
    </recommendedName>
    <alternativeName>
        <fullName evidence="1">PSI-B</fullName>
    </alternativeName>
    <alternativeName>
        <fullName evidence="1">PsaB</fullName>
    </alternativeName>
</protein>
<dbReference type="EC" id="1.97.1.12" evidence="1"/>
<dbReference type="EMBL" id="DQ898156">
    <property type="protein sequence ID" value="ABI32423.1"/>
    <property type="molecule type" value="Genomic_DNA"/>
</dbReference>
<dbReference type="RefSeq" id="YP_740116.1">
    <property type="nucleotide sequence ID" value="NC_008325.1"/>
</dbReference>
<dbReference type="SMR" id="Q0G9W3"/>
<dbReference type="GeneID" id="4266734"/>
<dbReference type="GO" id="GO:0009535">
    <property type="term" value="C:chloroplast thylakoid membrane"/>
    <property type="evidence" value="ECO:0007669"/>
    <property type="project" value="UniProtKB-SubCell"/>
</dbReference>
<dbReference type="GO" id="GO:0009522">
    <property type="term" value="C:photosystem I"/>
    <property type="evidence" value="ECO:0007669"/>
    <property type="project" value="UniProtKB-KW"/>
</dbReference>
<dbReference type="GO" id="GO:0051539">
    <property type="term" value="F:4 iron, 4 sulfur cluster binding"/>
    <property type="evidence" value="ECO:0007669"/>
    <property type="project" value="UniProtKB-KW"/>
</dbReference>
<dbReference type="GO" id="GO:0016168">
    <property type="term" value="F:chlorophyll binding"/>
    <property type="evidence" value="ECO:0007669"/>
    <property type="project" value="UniProtKB-KW"/>
</dbReference>
<dbReference type="GO" id="GO:0009055">
    <property type="term" value="F:electron transfer activity"/>
    <property type="evidence" value="ECO:0007669"/>
    <property type="project" value="UniProtKB-UniRule"/>
</dbReference>
<dbReference type="GO" id="GO:0000287">
    <property type="term" value="F:magnesium ion binding"/>
    <property type="evidence" value="ECO:0007669"/>
    <property type="project" value="UniProtKB-UniRule"/>
</dbReference>
<dbReference type="GO" id="GO:0016491">
    <property type="term" value="F:oxidoreductase activity"/>
    <property type="evidence" value="ECO:0007669"/>
    <property type="project" value="UniProtKB-KW"/>
</dbReference>
<dbReference type="GO" id="GO:0015979">
    <property type="term" value="P:photosynthesis"/>
    <property type="evidence" value="ECO:0007669"/>
    <property type="project" value="UniProtKB-UniRule"/>
</dbReference>
<dbReference type="FunFam" id="1.20.1130.10:FF:000001">
    <property type="entry name" value="Photosystem I P700 chlorophyll a apoprotein A2"/>
    <property type="match status" value="1"/>
</dbReference>
<dbReference type="Gene3D" id="1.20.1130.10">
    <property type="entry name" value="Photosystem I PsaA/PsaB"/>
    <property type="match status" value="1"/>
</dbReference>
<dbReference type="HAMAP" id="MF_00482">
    <property type="entry name" value="PSI_PsaB"/>
    <property type="match status" value="1"/>
</dbReference>
<dbReference type="InterPro" id="IPR001280">
    <property type="entry name" value="PSI_PsaA/B"/>
</dbReference>
<dbReference type="InterPro" id="IPR020586">
    <property type="entry name" value="PSI_PsaA/B_CS"/>
</dbReference>
<dbReference type="InterPro" id="IPR036408">
    <property type="entry name" value="PSI_PsaA/B_sf"/>
</dbReference>
<dbReference type="InterPro" id="IPR006244">
    <property type="entry name" value="PSI_PsaB"/>
</dbReference>
<dbReference type="NCBIfam" id="TIGR01336">
    <property type="entry name" value="psaB"/>
    <property type="match status" value="1"/>
</dbReference>
<dbReference type="PANTHER" id="PTHR30128">
    <property type="entry name" value="OUTER MEMBRANE PROTEIN, OMPA-RELATED"/>
    <property type="match status" value="1"/>
</dbReference>
<dbReference type="PANTHER" id="PTHR30128:SF19">
    <property type="entry name" value="PHOTOSYSTEM I P700 CHLOROPHYLL A APOPROTEIN A1-RELATED"/>
    <property type="match status" value="1"/>
</dbReference>
<dbReference type="Pfam" id="PF00223">
    <property type="entry name" value="PsaA_PsaB"/>
    <property type="match status" value="1"/>
</dbReference>
<dbReference type="PIRSF" id="PIRSF002905">
    <property type="entry name" value="PSI_A"/>
    <property type="match status" value="1"/>
</dbReference>
<dbReference type="PRINTS" id="PR00257">
    <property type="entry name" value="PHOTSYSPSAAB"/>
</dbReference>
<dbReference type="SUPFAM" id="SSF81558">
    <property type="entry name" value="Photosystem I subunits PsaA/PsaB"/>
    <property type="match status" value="1"/>
</dbReference>
<dbReference type="PROSITE" id="PS00419">
    <property type="entry name" value="PHOTOSYSTEM_I_PSAAB"/>
    <property type="match status" value="1"/>
</dbReference>
<feature type="chain" id="PRO_0000277111" description="Photosystem I P700 chlorophyll a apoprotein A2">
    <location>
        <begin position="1"/>
        <end position="734"/>
    </location>
</feature>
<feature type="transmembrane region" description="Helical; Name=I" evidence="1">
    <location>
        <begin position="46"/>
        <end position="69"/>
    </location>
</feature>
<feature type="transmembrane region" description="Helical; Name=II" evidence="1">
    <location>
        <begin position="135"/>
        <end position="158"/>
    </location>
</feature>
<feature type="transmembrane region" description="Helical; Name=III" evidence="1">
    <location>
        <begin position="175"/>
        <end position="199"/>
    </location>
</feature>
<feature type="transmembrane region" description="Helical; Name=IV" evidence="1">
    <location>
        <begin position="273"/>
        <end position="291"/>
    </location>
</feature>
<feature type="transmembrane region" description="Helical; Name=V" evidence="1">
    <location>
        <begin position="330"/>
        <end position="353"/>
    </location>
</feature>
<feature type="transmembrane region" description="Helical; Name=VI" evidence="1">
    <location>
        <begin position="369"/>
        <end position="395"/>
    </location>
</feature>
<feature type="transmembrane region" description="Helical; Name=VII" evidence="1">
    <location>
        <begin position="417"/>
        <end position="439"/>
    </location>
</feature>
<feature type="transmembrane region" description="Helical; Name=VIII" evidence="1">
    <location>
        <begin position="517"/>
        <end position="535"/>
    </location>
</feature>
<feature type="transmembrane region" description="Helical; Name=IX" evidence="1">
    <location>
        <begin position="575"/>
        <end position="596"/>
    </location>
</feature>
<feature type="transmembrane region" description="Helical; Name=X" evidence="1">
    <location>
        <begin position="643"/>
        <end position="665"/>
    </location>
</feature>
<feature type="transmembrane region" description="Helical; Name=XI" evidence="1">
    <location>
        <begin position="707"/>
        <end position="727"/>
    </location>
</feature>
<feature type="binding site" evidence="1">
    <location>
        <position position="559"/>
    </location>
    <ligand>
        <name>[4Fe-4S] cluster</name>
        <dbReference type="ChEBI" id="CHEBI:49883"/>
        <note>ligand shared between dimeric partners</note>
    </ligand>
</feature>
<feature type="binding site" evidence="1">
    <location>
        <position position="568"/>
    </location>
    <ligand>
        <name>[4Fe-4S] cluster</name>
        <dbReference type="ChEBI" id="CHEBI:49883"/>
        <note>ligand shared between dimeric partners</note>
    </ligand>
</feature>
<feature type="binding site" description="axial binding residue" evidence="1">
    <location>
        <position position="654"/>
    </location>
    <ligand>
        <name>chlorophyll a</name>
        <dbReference type="ChEBI" id="CHEBI:58416"/>
        <label>B1</label>
    </ligand>
    <ligandPart>
        <name>Mg</name>
        <dbReference type="ChEBI" id="CHEBI:25107"/>
    </ligandPart>
</feature>
<feature type="binding site" description="axial binding residue" evidence="1">
    <location>
        <position position="662"/>
    </location>
    <ligand>
        <name>chlorophyll a</name>
        <dbReference type="ChEBI" id="CHEBI:58416"/>
        <label>B3</label>
    </ligand>
    <ligandPart>
        <name>Mg</name>
        <dbReference type="ChEBI" id="CHEBI:25107"/>
    </ligandPart>
</feature>
<feature type="binding site" evidence="1">
    <location>
        <position position="670"/>
    </location>
    <ligand>
        <name>chlorophyll a</name>
        <dbReference type="ChEBI" id="CHEBI:58416"/>
        <label>B3</label>
    </ligand>
</feature>
<feature type="binding site" evidence="1">
    <location>
        <position position="671"/>
    </location>
    <ligand>
        <name>phylloquinone</name>
        <dbReference type="ChEBI" id="CHEBI:18067"/>
        <label>B</label>
    </ligand>
</feature>
<gene>
    <name evidence="1" type="primary">psaB</name>
</gene>
<reference key="1">
    <citation type="journal article" date="2006" name="BMC Genomics">
        <title>Complete plastid genome sequence of Daucus carota: implications for biotechnology and phylogeny of angiosperms.</title>
        <authorList>
            <person name="Ruhlman T."/>
            <person name="Lee S.-B."/>
            <person name="Jansen R.K."/>
            <person name="Hostetler J.B."/>
            <person name="Tallon L.J."/>
            <person name="Town C.D."/>
            <person name="Daniell H."/>
        </authorList>
    </citation>
    <scope>NUCLEOTIDE SEQUENCE [LARGE SCALE GENOMIC DNA]</scope>
    <source>
        <strain>cv. Danvers Half-long</strain>
    </source>
</reference>
<keyword id="KW-0004">4Fe-4S</keyword>
<keyword id="KW-0148">Chlorophyll</keyword>
<keyword id="KW-0150">Chloroplast</keyword>
<keyword id="KW-0157">Chromophore</keyword>
<keyword id="KW-0249">Electron transport</keyword>
<keyword id="KW-0408">Iron</keyword>
<keyword id="KW-0411">Iron-sulfur</keyword>
<keyword id="KW-0460">Magnesium</keyword>
<keyword id="KW-0472">Membrane</keyword>
<keyword id="KW-0479">Metal-binding</keyword>
<keyword id="KW-0560">Oxidoreductase</keyword>
<keyword id="KW-0602">Photosynthesis</keyword>
<keyword id="KW-0603">Photosystem I</keyword>
<keyword id="KW-0934">Plastid</keyword>
<keyword id="KW-0793">Thylakoid</keyword>
<keyword id="KW-0812">Transmembrane</keyword>
<keyword id="KW-1133">Transmembrane helix</keyword>
<keyword id="KW-0813">Transport</keyword>